<protein>
    <recommendedName>
        <fullName evidence="11">Beta-amyrin 28-monooxygenase</fullName>
        <ecNumber evidence="4">1.14.14.126</ecNumber>
    </recommendedName>
    <alternativeName>
        <fullName evidence="7">Beta-amyrin 28-oxidase</fullName>
    </alternativeName>
    <alternativeName>
        <fullName evidence="6">Cytochrome P450 CYP716A52v2</fullName>
    </alternativeName>
    <alternativeName>
        <fullName evidence="9">Oleanic acid synthase</fullName>
        <shortName evidence="11">PgOAS</shortName>
    </alternativeName>
</protein>
<dbReference type="EC" id="1.14.14.126" evidence="4"/>
<dbReference type="EMBL" id="JX036032">
    <property type="protein sequence ID" value="AFO63032.1"/>
    <property type="molecule type" value="mRNA"/>
</dbReference>
<dbReference type="SMR" id="I7C6E8"/>
<dbReference type="KEGG" id="ag:AFO63032"/>
<dbReference type="BioCyc" id="MetaCyc:MONOMER-20537"/>
<dbReference type="BRENDA" id="1.14.14.121">
    <property type="organism ID" value="7895"/>
</dbReference>
<dbReference type="BRENDA" id="1.14.14.126">
    <property type="organism ID" value="7895"/>
</dbReference>
<dbReference type="UniPathway" id="UPA00213"/>
<dbReference type="GO" id="GO:0016020">
    <property type="term" value="C:membrane"/>
    <property type="evidence" value="ECO:0007669"/>
    <property type="project" value="UniProtKB-SubCell"/>
</dbReference>
<dbReference type="GO" id="GO:0102373">
    <property type="term" value="F:beta-amyrin 28-monooxygenase activity"/>
    <property type="evidence" value="ECO:0007669"/>
    <property type="project" value="UniProtKB-EC"/>
</dbReference>
<dbReference type="GO" id="GO:0020037">
    <property type="term" value="F:heme binding"/>
    <property type="evidence" value="ECO:0007669"/>
    <property type="project" value="InterPro"/>
</dbReference>
<dbReference type="GO" id="GO:0005506">
    <property type="term" value="F:iron ion binding"/>
    <property type="evidence" value="ECO:0007669"/>
    <property type="project" value="InterPro"/>
</dbReference>
<dbReference type="GO" id="GO:0016709">
    <property type="term" value="F:oxidoreductase activity, acting on paired donors, with incorporation or reduction of molecular oxygen, NAD(P)H as one donor, and incorporation of one atom of oxygen"/>
    <property type="evidence" value="ECO:0000314"/>
    <property type="project" value="UniProtKB"/>
</dbReference>
<dbReference type="GO" id="GO:0019742">
    <property type="term" value="P:pentacyclic triterpenoid metabolic process"/>
    <property type="evidence" value="ECO:0000314"/>
    <property type="project" value="UniProtKB"/>
</dbReference>
<dbReference type="GO" id="GO:0016125">
    <property type="term" value="P:sterol metabolic process"/>
    <property type="evidence" value="ECO:0007669"/>
    <property type="project" value="TreeGrafter"/>
</dbReference>
<dbReference type="GO" id="GO:0016114">
    <property type="term" value="P:terpenoid biosynthetic process"/>
    <property type="evidence" value="ECO:0007669"/>
    <property type="project" value="UniProtKB-UniPathway"/>
</dbReference>
<dbReference type="CDD" id="cd11043">
    <property type="entry name" value="CYP90-like"/>
    <property type="match status" value="1"/>
</dbReference>
<dbReference type="FunFam" id="1.10.630.10:FF:000022">
    <property type="entry name" value="Taxadiene 5-alpha hydroxylase"/>
    <property type="match status" value="1"/>
</dbReference>
<dbReference type="Gene3D" id="1.10.630.10">
    <property type="entry name" value="Cytochrome P450"/>
    <property type="match status" value="1"/>
</dbReference>
<dbReference type="InterPro" id="IPR001128">
    <property type="entry name" value="Cyt_P450"/>
</dbReference>
<dbReference type="InterPro" id="IPR017972">
    <property type="entry name" value="Cyt_P450_CS"/>
</dbReference>
<dbReference type="InterPro" id="IPR002401">
    <property type="entry name" value="Cyt_P450_E_grp-I"/>
</dbReference>
<dbReference type="InterPro" id="IPR036396">
    <property type="entry name" value="Cyt_P450_sf"/>
</dbReference>
<dbReference type="PANTHER" id="PTHR24286">
    <property type="entry name" value="CYTOCHROME P450 26"/>
    <property type="match status" value="1"/>
</dbReference>
<dbReference type="PANTHER" id="PTHR24286:SF349">
    <property type="entry name" value="CYTOCHROME P450 716A1-RELATED"/>
    <property type="match status" value="1"/>
</dbReference>
<dbReference type="Pfam" id="PF00067">
    <property type="entry name" value="p450"/>
    <property type="match status" value="1"/>
</dbReference>
<dbReference type="PRINTS" id="PR00463">
    <property type="entry name" value="EP450I"/>
</dbReference>
<dbReference type="PRINTS" id="PR00385">
    <property type="entry name" value="P450"/>
</dbReference>
<dbReference type="SUPFAM" id="SSF48264">
    <property type="entry name" value="Cytochrome P450"/>
    <property type="match status" value="1"/>
</dbReference>
<dbReference type="PROSITE" id="PS00086">
    <property type="entry name" value="CYTOCHROME_P450"/>
    <property type="match status" value="1"/>
</dbReference>
<organism>
    <name type="scientific">Panax ginseng</name>
    <name type="common">Korean ginseng</name>
    <dbReference type="NCBI Taxonomy" id="4054"/>
    <lineage>
        <taxon>Eukaryota</taxon>
        <taxon>Viridiplantae</taxon>
        <taxon>Streptophyta</taxon>
        <taxon>Embryophyta</taxon>
        <taxon>Tracheophyta</taxon>
        <taxon>Spermatophyta</taxon>
        <taxon>Magnoliopsida</taxon>
        <taxon>eudicotyledons</taxon>
        <taxon>Gunneridae</taxon>
        <taxon>Pentapetalae</taxon>
        <taxon>asterids</taxon>
        <taxon>campanulids</taxon>
        <taxon>Apiales</taxon>
        <taxon>Araliaceae</taxon>
        <taxon>Panax</taxon>
    </lineage>
</organism>
<name>C7A52_PANGI</name>
<proteinExistence type="evidence at protein level"/>
<gene>
    <name evidence="6 10" type="primary">CYP716A52v2</name>
    <name evidence="9 10" type="synonym">OAS</name>
</gene>
<feature type="chain" id="PRO_0000425881" description="Beta-amyrin 28-monooxygenase">
    <location>
        <begin position="1"/>
        <end position="481"/>
    </location>
</feature>
<feature type="transmembrane region" description="Helical" evidence="2">
    <location>
        <begin position="4"/>
        <end position="24"/>
    </location>
</feature>
<feature type="binding site" description="axial binding residue" evidence="1">
    <location>
        <position position="428"/>
    </location>
    <ligand>
        <name>heme</name>
        <dbReference type="ChEBI" id="CHEBI:30413"/>
    </ligand>
    <ligandPart>
        <name>Fe</name>
        <dbReference type="ChEBI" id="CHEBI:18248"/>
    </ligandPart>
</feature>
<sequence length="481" mass="53955">MELFYVPLLSLFVLFISLSFHFLFYKSKPSSSGGFPLPPGKTGWPIIGESYEFLSTGWKGYPEKFIFDRMTKYSSNVFKTSIFGEPAAVFCGAACNKFLFSNENKLVQAWWPDSVNKVFPSSTQTSSKEEAIKMRKMLPNFFKPEALQRYIGLMDQIAANHFESGWENKNEVVVFPLAKSYTFWIACKVFVSVEEPAQVAELLEPFSAIASGIISVPIDLPGTPFNSAIKSSKIVRRKLVGIIKQRKIDLGEGKASATQDILSHMLLTSDESGKFMGEGDIADKILGLLIGGHDTASSACTFVVKFLAELPQIYEGVYQEQMEIVKSKKAGELLKWEDIQKMKYSWNVACEVLRLAPPLQGAFREALSDFTYNGFSIPKGWKLYWSANSTHINSEVFPEPLKFDPSRFDGAGPPPFSFVPFGGGPRMCPGKEYARLEILVFMHHLVKRFKWEKVIPDEKIVVNPMPIPANGLPVRLFPHKA</sequence>
<reference key="1">
    <citation type="journal article" date="2012" name="Plant Cell Physiol.">
        <title>Cytochrome P450 CYP716A53v2 catalyzes the formation of protopanaxatriol from protopanaxadiol during ginsenoside biosynthesis in Panax ginseng.</title>
        <authorList>
            <person name="Han J.Y."/>
            <person name="Hwang H.S."/>
            <person name="Choi S.W."/>
            <person name="Kim H.J."/>
            <person name="Choi Y.E."/>
        </authorList>
    </citation>
    <scope>NUCLEOTIDE SEQUENCE [MRNA]</scope>
    <scope>TISSUE SPECIFICITY</scope>
    <scope>CATALYTIC ACTIVITY</scope>
    <scope>LACK OF INDUCTION BY MEJA</scope>
</reference>
<reference key="2">
    <citation type="journal article" date="2013" name="Plant Cell Physiol.">
        <title>The involvement of beta-amyrin 28-oxidase (CYP716A52v2) in oleanane-type ginsenoside biosynthesis in Panax ginseng.</title>
        <authorList>
            <person name="Han J.Y."/>
            <person name="Kim M.J."/>
            <person name="Ban Y.W."/>
            <person name="Hwang H.S."/>
            <person name="Choi Y.E."/>
        </authorList>
    </citation>
    <scope>FUNCTION</scope>
    <scope>CATALYTIC ACTIVITY</scope>
</reference>
<reference key="3">
    <citation type="journal article" date="2018" name="Biotechnol. Appl. Biochem.">
        <title>Advances in ginsenoside biosynthesis and metabolic regulation.</title>
        <authorList>
            <person name="Lu J."/>
            <person name="Li J."/>
            <person name="Wang S."/>
            <person name="Yao L."/>
            <person name="Liang W."/>
            <person name="Wang J."/>
            <person name="Gao W."/>
        </authorList>
    </citation>
    <scope>REVIEW</scope>
</reference>
<reference key="4">
    <citation type="journal article" date="2018" name="Molecules">
        <title>Progress on the studies of the key enzymes of ginsenoside biosynthesis.</title>
        <authorList>
            <person name="Yang J.-L."/>
            <person name="Hu Z.-F."/>
            <person name="Zhang T.-T."/>
            <person name="Gu A.-D."/>
            <person name="Gong T."/>
            <person name="Zhu P."/>
        </authorList>
    </citation>
    <scope>REVIEW</scope>
    <scope>NOMENCLATURE</scope>
</reference>
<reference key="5">
    <citation type="journal article" date="2018" name="Molecules">
        <title>The effects of environmental factors on ginsenoside biosynthetic enzyme gene expression and saponin abundance.</title>
        <authorList>
            <person name="Zhang T."/>
            <person name="Han M."/>
            <person name="Yang L."/>
            <person name="Han Z."/>
            <person name="Cheng L."/>
            <person name="Sun Z."/>
            <person name="Yang L."/>
        </authorList>
    </citation>
    <scope>DEVELOPMENTAL STAGE</scope>
    <scope>TISSUE SPECIFICITY</scope>
    <scope>INDUCTION BY ABIOTIC FACTORS</scope>
</reference>
<evidence type="ECO:0000250" key="1">
    <source>
        <dbReference type="UniProtKB" id="Q96242"/>
    </source>
</evidence>
<evidence type="ECO:0000255" key="2"/>
<evidence type="ECO:0000269" key="3">
    <source>
    </source>
</evidence>
<evidence type="ECO:0000269" key="4">
    <source>
    </source>
</evidence>
<evidence type="ECO:0000269" key="5">
    <source>
    </source>
</evidence>
<evidence type="ECO:0000303" key="6">
    <source>
    </source>
</evidence>
<evidence type="ECO:0000303" key="7">
    <source>
    </source>
</evidence>
<evidence type="ECO:0000303" key="8">
    <source>
    </source>
</evidence>
<evidence type="ECO:0000303" key="9">
    <source>
    </source>
</evidence>
<evidence type="ECO:0000303" key="10">
    <source>
    </source>
</evidence>
<evidence type="ECO:0000305" key="11"/>
<comment type="function">
    <text evidence="4 8">Component of the oleanane-type triterpene saponins (e.g. ginsenosides or panaxosides) biosynthetic pathway (PubMed:29378087). Catalyzes the carboxylation of beta-amyrin at the C-28 position to form oleanolic acid during ginsenoside biosynthesis, a class of tetracyclic triterpenoid saponins.</text>
</comment>
<comment type="catalytic activity">
    <reaction evidence="4">
        <text>beta-amyrin + 3 reduced [NADPH--hemoprotein reductase] + 3 O2 = oleanolate + 3 oxidized [NADPH--hemoprotein reductase] + 4 H2O + 4 H(+)</text>
        <dbReference type="Rhea" id="RHEA:43068"/>
        <dbReference type="Rhea" id="RHEA-COMP:11964"/>
        <dbReference type="Rhea" id="RHEA-COMP:11965"/>
        <dbReference type="ChEBI" id="CHEBI:10352"/>
        <dbReference type="ChEBI" id="CHEBI:15377"/>
        <dbReference type="ChEBI" id="CHEBI:15378"/>
        <dbReference type="ChEBI" id="CHEBI:15379"/>
        <dbReference type="ChEBI" id="CHEBI:57618"/>
        <dbReference type="ChEBI" id="CHEBI:58210"/>
        <dbReference type="ChEBI" id="CHEBI:82828"/>
        <dbReference type="EC" id="1.14.14.126"/>
    </reaction>
</comment>
<comment type="cofactor">
    <cofactor evidence="1">
        <name>heme</name>
        <dbReference type="ChEBI" id="CHEBI:30413"/>
    </cofactor>
</comment>
<comment type="pathway">
    <text evidence="11">Secondary metabolite biosynthesis; terpenoid biosynthesis.</text>
</comment>
<comment type="subcellular location">
    <subcellularLocation>
        <location evidence="2">Membrane</location>
        <topology evidence="2">Single-pass membrane protein</topology>
    </subcellularLocation>
</comment>
<comment type="tissue specificity">
    <text evidence="3 5">Mostly expressed in roots, and, to a lower extent, in stems and leaves (PubMed:30577538). Accumulates only in the rhizome of plants (PubMed:22875608).</text>
</comment>
<comment type="developmental stage">
    <text evidence="5">Progressive increase in roots from the leaf opened stage to the green fruit, red fruit and root growth stages, respectively.</text>
</comment>
<comment type="induction">
    <text evidence="3 5">Expression is not affected by methyl jasmonate (MeJA) treatment (PubMed:22875608). Influenced in roots and leaves by relative humidity and soil water potential (PubMed:30577538).</text>
</comment>
<comment type="similarity">
    <text evidence="11">Belongs to the cytochrome P450 family.</text>
</comment>
<accession>I7C6E8</accession>
<keyword id="KW-0349">Heme</keyword>
<keyword id="KW-0408">Iron</keyword>
<keyword id="KW-0414">Isoprene biosynthesis</keyword>
<keyword id="KW-0472">Membrane</keyword>
<keyword id="KW-0479">Metal-binding</keyword>
<keyword id="KW-0503">Monooxygenase</keyword>
<keyword id="KW-0560">Oxidoreductase</keyword>
<keyword id="KW-0812">Transmembrane</keyword>
<keyword id="KW-1133">Transmembrane helix</keyword>